<name>PUR4_YERPS</name>
<protein>
    <recommendedName>
        <fullName evidence="1">Phosphoribosylformylglycinamidine synthase</fullName>
        <shortName evidence="1">FGAM synthase</shortName>
        <shortName evidence="1">FGAMS</shortName>
        <ecNumber evidence="1">6.3.5.3</ecNumber>
    </recommendedName>
    <alternativeName>
        <fullName evidence="1">Formylglycinamide ribonucleotide amidotransferase</fullName>
        <shortName evidence="1">FGAR amidotransferase</shortName>
        <shortName evidence="1">FGAR-AT</shortName>
    </alternativeName>
</protein>
<feature type="chain" id="PRO_0000264604" description="Phosphoribosylformylglycinamidine synthase">
    <location>
        <begin position="1"/>
        <end position="1296"/>
    </location>
</feature>
<feature type="domain" description="Glutamine amidotransferase type-1" evidence="1">
    <location>
        <begin position="1043"/>
        <end position="1296"/>
    </location>
</feature>
<feature type="region of interest" description="Disordered" evidence="2">
    <location>
        <begin position="304"/>
        <end position="323"/>
    </location>
</feature>
<feature type="region of interest" description="Disordered" evidence="2">
    <location>
        <begin position="1000"/>
        <end position="1019"/>
    </location>
</feature>
<feature type="compositionally biased region" description="Basic and acidic residues" evidence="2">
    <location>
        <begin position="1000"/>
        <end position="1013"/>
    </location>
</feature>
<feature type="active site" description="Nucleophile" evidence="1">
    <location>
        <position position="1136"/>
    </location>
</feature>
<feature type="active site" evidence="1">
    <location>
        <position position="1261"/>
    </location>
</feature>
<feature type="active site" evidence="1">
    <location>
        <position position="1263"/>
    </location>
</feature>
<feature type="binding site" evidence="1">
    <location>
        <begin position="306"/>
        <end position="317"/>
    </location>
    <ligand>
        <name>ATP</name>
        <dbReference type="ChEBI" id="CHEBI:30616"/>
    </ligand>
</feature>
<feature type="binding site" evidence="1">
    <location>
        <position position="677"/>
    </location>
    <ligand>
        <name>ATP</name>
        <dbReference type="ChEBI" id="CHEBI:30616"/>
    </ligand>
</feature>
<feature type="binding site" evidence="1">
    <location>
        <position position="678"/>
    </location>
    <ligand>
        <name>Mg(2+)</name>
        <dbReference type="ChEBI" id="CHEBI:18420"/>
    </ligand>
</feature>
<feature type="binding site" evidence="1">
    <location>
        <position position="717"/>
    </location>
    <ligand>
        <name>Mg(2+)</name>
        <dbReference type="ChEBI" id="CHEBI:18420"/>
    </ligand>
</feature>
<feature type="binding site" evidence="1">
    <location>
        <position position="721"/>
    </location>
    <ligand>
        <name>Mg(2+)</name>
        <dbReference type="ChEBI" id="CHEBI:18420"/>
    </ligand>
</feature>
<feature type="binding site" evidence="1">
    <location>
        <position position="885"/>
    </location>
    <ligand>
        <name>Mg(2+)</name>
        <dbReference type="ChEBI" id="CHEBI:18420"/>
    </ligand>
</feature>
<feature type="binding site" evidence="1">
    <location>
        <position position="887"/>
    </location>
    <ligand>
        <name>ATP</name>
        <dbReference type="ChEBI" id="CHEBI:30616"/>
    </ligand>
</feature>
<reference key="1">
    <citation type="journal article" date="2004" name="Proc. Natl. Acad. Sci. U.S.A.">
        <title>Insights into the evolution of Yersinia pestis through whole-genome comparison with Yersinia pseudotuberculosis.</title>
        <authorList>
            <person name="Chain P.S.G."/>
            <person name="Carniel E."/>
            <person name="Larimer F.W."/>
            <person name="Lamerdin J."/>
            <person name="Stoutland P.O."/>
            <person name="Regala W.M."/>
            <person name="Georgescu A.M."/>
            <person name="Vergez L.M."/>
            <person name="Land M.L."/>
            <person name="Motin V.L."/>
            <person name="Brubaker R.R."/>
            <person name="Fowler J."/>
            <person name="Hinnebusch J."/>
            <person name="Marceau M."/>
            <person name="Medigue C."/>
            <person name="Simonet M."/>
            <person name="Chenal-Francisque V."/>
            <person name="Souza B."/>
            <person name="Dacheux D."/>
            <person name="Elliott J.M."/>
            <person name="Derbise A."/>
            <person name="Hauser L.J."/>
            <person name="Garcia E."/>
        </authorList>
    </citation>
    <scope>NUCLEOTIDE SEQUENCE [LARGE SCALE GENOMIC DNA]</scope>
    <source>
        <strain>IP32953</strain>
    </source>
</reference>
<proteinExistence type="inferred from homology"/>
<dbReference type="EC" id="6.3.5.3" evidence="1"/>
<dbReference type="EMBL" id="BX936398">
    <property type="protein sequence ID" value="CAH22117.1"/>
    <property type="molecule type" value="Genomic_DNA"/>
</dbReference>
<dbReference type="RefSeq" id="WP_011192822.1">
    <property type="nucleotide sequence ID" value="NC_006155.1"/>
</dbReference>
<dbReference type="SMR" id="Q667W1"/>
<dbReference type="KEGG" id="ypo:BZ17_3752"/>
<dbReference type="KEGG" id="yps:YPTB2879"/>
<dbReference type="PATRIC" id="fig|273123.14.peg.3934"/>
<dbReference type="UniPathway" id="UPA00074">
    <property type="reaction ID" value="UER00128"/>
</dbReference>
<dbReference type="Proteomes" id="UP000001011">
    <property type="component" value="Chromosome"/>
</dbReference>
<dbReference type="GO" id="GO:0005737">
    <property type="term" value="C:cytoplasm"/>
    <property type="evidence" value="ECO:0007669"/>
    <property type="project" value="UniProtKB-SubCell"/>
</dbReference>
<dbReference type="GO" id="GO:0005524">
    <property type="term" value="F:ATP binding"/>
    <property type="evidence" value="ECO:0007669"/>
    <property type="project" value="UniProtKB-UniRule"/>
</dbReference>
<dbReference type="GO" id="GO:0046872">
    <property type="term" value="F:metal ion binding"/>
    <property type="evidence" value="ECO:0007669"/>
    <property type="project" value="UniProtKB-KW"/>
</dbReference>
<dbReference type="GO" id="GO:0004642">
    <property type="term" value="F:phosphoribosylformylglycinamidine synthase activity"/>
    <property type="evidence" value="ECO:0007669"/>
    <property type="project" value="UniProtKB-UniRule"/>
</dbReference>
<dbReference type="GO" id="GO:0006189">
    <property type="term" value="P:'de novo' IMP biosynthetic process"/>
    <property type="evidence" value="ECO:0007669"/>
    <property type="project" value="UniProtKB-UniRule"/>
</dbReference>
<dbReference type="CDD" id="cd01740">
    <property type="entry name" value="GATase1_FGAR_AT"/>
    <property type="match status" value="1"/>
</dbReference>
<dbReference type="CDD" id="cd02203">
    <property type="entry name" value="PurL_repeat1"/>
    <property type="match status" value="1"/>
</dbReference>
<dbReference type="FunFam" id="1.10.8.750:FF:000002">
    <property type="entry name" value="Phosphoribosylformylglycinamidine synthase"/>
    <property type="match status" value="1"/>
</dbReference>
<dbReference type="FunFam" id="3.30.1330.10:FF:000002">
    <property type="entry name" value="Phosphoribosylformylglycinamidine synthase"/>
    <property type="match status" value="1"/>
</dbReference>
<dbReference type="FunFam" id="3.30.1330.10:FF:000005">
    <property type="entry name" value="Phosphoribosylformylglycinamidine synthase"/>
    <property type="match status" value="1"/>
</dbReference>
<dbReference type="FunFam" id="3.40.50.880:FF:000008">
    <property type="entry name" value="Phosphoribosylformylglycinamidine synthase"/>
    <property type="match status" value="1"/>
</dbReference>
<dbReference type="FunFam" id="3.90.650.10:FF:000002">
    <property type="entry name" value="Phosphoribosylformylglycinamidine synthase"/>
    <property type="match status" value="1"/>
</dbReference>
<dbReference type="FunFam" id="3.90.650.10:FF:000005">
    <property type="entry name" value="Phosphoribosylformylglycinamidine synthase"/>
    <property type="match status" value="1"/>
</dbReference>
<dbReference type="Gene3D" id="3.40.50.880">
    <property type="match status" value="1"/>
</dbReference>
<dbReference type="Gene3D" id="1.10.8.750">
    <property type="entry name" value="Phosphoribosylformylglycinamidine synthase, linker domain"/>
    <property type="match status" value="1"/>
</dbReference>
<dbReference type="Gene3D" id="3.90.650.10">
    <property type="entry name" value="PurM-like C-terminal domain"/>
    <property type="match status" value="2"/>
</dbReference>
<dbReference type="Gene3D" id="3.30.1330.10">
    <property type="entry name" value="PurM-like, N-terminal domain"/>
    <property type="match status" value="2"/>
</dbReference>
<dbReference type="HAMAP" id="MF_00419">
    <property type="entry name" value="PurL_1"/>
    <property type="match status" value="1"/>
</dbReference>
<dbReference type="InterPro" id="IPR029062">
    <property type="entry name" value="Class_I_gatase-like"/>
</dbReference>
<dbReference type="InterPro" id="IPR040707">
    <property type="entry name" value="FGAR-AT_N"/>
</dbReference>
<dbReference type="InterPro" id="IPR055181">
    <property type="entry name" value="FGAR-AT_PurM_N-like"/>
</dbReference>
<dbReference type="InterPro" id="IPR010073">
    <property type="entry name" value="PurL_large"/>
</dbReference>
<dbReference type="InterPro" id="IPR041609">
    <property type="entry name" value="PurL_linker"/>
</dbReference>
<dbReference type="InterPro" id="IPR010918">
    <property type="entry name" value="PurM-like_C_dom"/>
</dbReference>
<dbReference type="InterPro" id="IPR036676">
    <property type="entry name" value="PurM-like_C_sf"/>
</dbReference>
<dbReference type="InterPro" id="IPR036921">
    <property type="entry name" value="PurM-like_N_sf"/>
</dbReference>
<dbReference type="InterPro" id="IPR036604">
    <property type="entry name" value="PurS-like_sf"/>
</dbReference>
<dbReference type="NCBIfam" id="TIGR01735">
    <property type="entry name" value="FGAM_synt"/>
    <property type="match status" value="1"/>
</dbReference>
<dbReference type="NCBIfam" id="NF003672">
    <property type="entry name" value="PRK05297.1"/>
    <property type="match status" value="1"/>
</dbReference>
<dbReference type="PANTHER" id="PTHR10099">
    <property type="entry name" value="PHOSPHORIBOSYLFORMYLGLYCINAMIDINE SYNTHASE"/>
    <property type="match status" value="1"/>
</dbReference>
<dbReference type="PANTHER" id="PTHR10099:SF1">
    <property type="entry name" value="PHOSPHORIBOSYLFORMYLGLYCINAMIDINE SYNTHASE"/>
    <property type="match status" value="1"/>
</dbReference>
<dbReference type="Pfam" id="PF02769">
    <property type="entry name" value="AIRS_C"/>
    <property type="match status" value="2"/>
</dbReference>
<dbReference type="Pfam" id="PF18072">
    <property type="entry name" value="FGAR-AT_linker"/>
    <property type="match status" value="1"/>
</dbReference>
<dbReference type="Pfam" id="PF18076">
    <property type="entry name" value="FGAR-AT_N"/>
    <property type="match status" value="1"/>
</dbReference>
<dbReference type="Pfam" id="PF22689">
    <property type="entry name" value="FGAR-AT_PurM_N-like"/>
    <property type="match status" value="1"/>
</dbReference>
<dbReference type="Pfam" id="PF13507">
    <property type="entry name" value="GATase_5"/>
    <property type="match status" value="1"/>
</dbReference>
<dbReference type="SMART" id="SM01211">
    <property type="entry name" value="GATase_5"/>
    <property type="match status" value="1"/>
</dbReference>
<dbReference type="SUPFAM" id="SSF52317">
    <property type="entry name" value="Class I glutamine amidotransferase-like"/>
    <property type="match status" value="1"/>
</dbReference>
<dbReference type="SUPFAM" id="SSF109736">
    <property type="entry name" value="FGAM synthase PurL, linker domain"/>
    <property type="match status" value="1"/>
</dbReference>
<dbReference type="SUPFAM" id="SSF56042">
    <property type="entry name" value="PurM C-terminal domain-like"/>
    <property type="match status" value="2"/>
</dbReference>
<dbReference type="SUPFAM" id="SSF55326">
    <property type="entry name" value="PurM N-terminal domain-like"/>
    <property type="match status" value="2"/>
</dbReference>
<dbReference type="SUPFAM" id="SSF82697">
    <property type="entry name" value="PurS-like"/>
    <property type="match status" value="1"/>
</dbReference>
<dbReference type="PROSITE" id="PS51273">
    <property type="entry name" value="GATASE_TYPE_1"/>
    <property type="match status" value="1"/>
</dbReference>
<keyword id="KW-0067">ATP-binding</keyword>
<keyword id="KW-0963">Cytoplasm</keyword>
<keyword id="KW-0315">Glutamine amidotransferase</keyword>
<keyword id="KW-0436">Ligase</keyword>
<keyword id="KW-0460">Magnesium</keyword>
<keyword id="KW-0479">Metal-binding</keyword>
<keyword id="KW-0547">Nucleotide-binding</keyword>
<keyword id="KW-0658">Purine biosynthesis</keyword>
<gene>
    <name evidence="1" type="primary">purL</name>
    <name type="ordered locus">YPTB2879</name>
</gene>
<evidence type="ECO:0000255" key="1">
    <source>
        <dbReference type="HAMAP-Rule" id="MF_00419"/>
    </source>
</evidence>
<evidence type="ECO:0000256" key="2">
    <source>
        <dbReference type="SAM" id="MobiDB-lite"/>
    </source>
</evidence>
<organism>
    <name type="scientific">Yersinia pseudotuberculosis serotype I (strain IP32953)</name>
    <dbReference type="NCBI Taxonomy" id="273123"/>
    <lineage>
        <taxon>Bacteria</taxon>
        <taxon>Pseudomonadati</taxon>
        <taxon>Pseudomonadota</taxon>
        <taxon>Gammaproteobacteria</taxon>
        <taxon>Enterobacterales</taxon>
        <taxon>Yersiniaceae</taxon>
        <taxon>Yersinia</taxon>
    </lineage>
</organism>
<sequence>MEILRGSPALSAFRITKLLSRCQDAHLPVSDIYAEYVHFADVSAPLSADEHARLQRLLQYGPSLPEHPPAGRLLLVTPRPGTISPWSSKATDIAHNCGLSQILRLERGLAFSIQGPNLNEGQWKQLAALLHDRMMETVFTDLQQAEQLFSHHQPAPVQRVDILGQGRSALEQANIKLGLALAQDEIDYLLTAFTGLGRNPTDIELYMFAQANSEHCRHKIFNADWVIDGVAQPKTLFKMIKNTFEHTPDYVLSAYKDNAAVMEGSQVGRFYATAEKGIYDYHQEEAHILMKVETHNHPTAISPWPGAATGSGGEIRDEGATGRGAKPKAGLVGFSVSNLRIPGFEQPWEENFGKPDRIVTALDIMTEGPLGGAAFNNEFGRPALLGYFRTYEERVNSHNGIELRGYHKPIMLAGGLGNIRADHVQKGEITVGAKLVVLGGPSMNIGLGGGAASSMASGQSDADLDFASVQRDNPEMERRCQEVIDRCWQLGEYNPILFIHDVGAGGLSNAMPELVNDGGRGGRFELRDILNDEPGMSPLEVWCNESQERYVLAVAPAQMALFDEICRRERAPYAVIGEATEEKHLLLNDRHFGNQPIDMPLDVLLGKTPKMLRDVTRLQAKGDALQRADISLAEAVKRIMHLPAVAEKTFLITIGDRTVTGMVTRDQMVGPWQIPVADCAVTSASLDSYYGEAMSLGERAPVALLDFAASARLAVGEALTNIAATQIGELKRIKLSANWMSAAGHPGEDAGLYDAVRAVGEELCPALEITIPVGKDSMSMKTRWQEGHEQREMTSPLSLVITAFARIEDVRRTVTPQLRTDKGDNALLLIDLGAGHNALGATALTQVYRQLGDKPADVRNVQQLAGFFNAMQRLVADQHLLAYHDRSDGGLLVTLAEMAFAGHCGVTVDIQSLGNDALAALFNEELGAVIQVRAEQRADVEKLLADHGLANCVHYLGRAVAGDTFDIRSGTDVVYSEKRSTLRLWWAETSWQMQRLRDNPDCADQEHQAKQDESDPGLNVKLTFDPAEDIAAPFILKQARPKVAVLREQGVNSHVEMAAAFHRAGFDAVDVHMSDLLAGRTDLQSFQTLVACGGFSYGDVLGAGEGWAKSILFNDRVRDEFEAFFHRPTTLALGVCNGCQMMSNLRELIPGAEHWPRFVRNLSDSFEARFSLVEVASSPSLFMQDMVGSRMPIAVSHGEGQVEVRDAAHLAALEQSHLVALRFVNNHGVVTEQYPANPNGSANGITAVTSVSGRATVMMPHPERVFRTVSNSWHPEEWGEDSPWMRMFRNARKQLG</sequence>
<comment type="function">
    <text evidence="1">Phosphoribosylformylglycinamidine synthase involved in the purines biosynthetic pathway. Catalyzes the ATP-dependent conversion of formylglycinamide ribonucleotide (FGAR) and glutamine to yield formylglycinamidine ribonucleotide (FGAM) and glutamate.</text>
</comment>
<comment type="catalytic activity">
    <reaction evidence="1">
        <text>N(2)-formyl-N(1)-(5-phospho-beta-D-ribosyl)glycinamide + L-glutamine + ATP + H2O = 2-formamido-N(1)-(5-O-phospho-beta-D-ribosyl)acetamidine + L-glutamate + ADP + phosphate + H(+)</text>
        <dbReference type="Rhea" id="RHEA:17129"/>
        <dbReference type="ChEBI" id="CHEBI:15377"/>
        <dbReference type="ChEBI" id="CHEBI:15378"/>
        <dbReference type="ChEBI" id="CHEBI:29985"/>
        <dbReference type="ChEBI" id="CHEBI:30616"/>
        <dbReference type="ChEBI" id="CHEBI:43474"/>
        <dbReference type="ChEBI" id="CHEBI:58359"/>
        <dbReference type="ChEBI" id="CHEBI:147286"/>
        <dbReference type="ChEBI" id="CHEBI:147287"/>
        <dbReference type="ChEBI" id="CHEBI:456216"/>
        <dbReference type="EC" id="6.3.5.3"/>
    </reaction>
</comment>
<comment type="pathway">
    <text evidence="1">Purine metabolism; IMP biosynthesis via de novo pathway; 5-amino-1-(5-phospho-D-ribosyl)imidazole from N(2)-formyl-N(1)-(5-phospho-D-ribosyl)glycinamide: step 1/2.</text>
</comment>
<comment type="subunit">
    <text evidence="1">Monomer.</text>
</comment>
<comment type="subcellular location">
    <subcellularLocation>
        <location evidence="1">Cytoplasm</location>
    </subcellularLocation>
</comment>
<comment type="similarity">
    <text evidence="1">In the N-terminal section; belongs to the FGAMS family.</text>
</comment>
<accession>Q667W1</accession>